<keyword id="KW-0012">Acyltransferase</keyword>
<keyword id="KW-0133">Cell shape</keyword>
<keyword id="KW-0961">Cell wall biogenesis/degradation</keyword>
<keyword id="KW-0963">Cytoplasm</keyword>
<keyword id="KW-0460">Magnesium</keyword>
<keyword id="KW-0479">Metal-binding</keyword>
<keyword id="KW-0511">Multifunctional enzyme</keyword>
<keyword id="KW-0548">Nucleotidyltransferase</keyword>
<keyword id="KW-0573">Peptidoglycan synthesis</keyword>
<keyword id="KW-0677">Repeat</keyword>
<keyword id="KW-0808">Transferase</keyword>
<dbReference type="EC" id="2.7.7.23" evidence="1"/>
<dbReference type="EC" id="2.3.1.157" evidence="1"/>
<dbReference type="EMBL" id="CP001144">
    <property type="protein sequence ID" value="ACH78066.1"/>
    <property type="molecule type" value="Genomic_DNA"/>
</dbReference>
<dbReference type="RefSeq" id="WP_000934851.1">
    <property type="nucleotide sequence ID" value="NC_011205.1"/>
</dbReference>
<dbReference type="SMR" id="B5FN29"/>
<dbReference type="KEGG" id="sed:SeD_A4251"/>
<dbReference type="HOGENOM" id="CLU_029499_15_2_6"/>
<dbReference type="UniPathway" id="UPA00113">
    <property type="reaction ID" value="UER00532"/>
</dbReference>
<dbReference type="UniPathway" id="UPA00113">
    <property type="reaction ID" value="UER00533"/>
</dbReference>
<dbReference type="UniPathway" id="UPA00973"/>
<dbReference type="Proteomes" id="UP000008322">
    <property type="component" value="Chromosome"/>
</dbReference>
<dbReference type="GO" id="GO:0005737">
    <property type="term" value="C:cytoplasm"/>
    <property type="evidence" value="ECO:0007669"/>
    <property type="project" value="UniProtKB-SubCell"/>
</dbReference>
<dbReference type="GO" id="GO:0016020">
    <property type="term" value="C:membrane"/>
    <property type="evidence" value="ECO:0007669"/>
    <property type="project" value="GOC"/>
</dbReference>
<dbReference type="GO" id="GO:0019134">
    <property type="term" value="F:glucosamine-1-phosphate N-acetyltransferase activity"/>
    <property type="evidence" value="ECO:0007669"/>
    <property type="project" value="UniProtKB-UniRule"/>
</dbReference>
<dbReference type="GO" id="GO:0000287">
    <property type="term" value="F:magnesium ion binding"/>
    <property type="evidence" value="ECO:0007669"/>
    <property type="project" value="UniProtKB-UniRule"/>
</dbReference>
<dbReference type="GO" id="GO:0003977">
    <property type="term" value="F:UDP-N-acetylglucosamine diphosphorylase activity"/>
    <property type="evidence" value="ECO:0007669"/>
    <property type="project" value="UniProtKB-UniRule"/>
</dbReference>
<dbReference type="GO" id="GO:0000902">
    <property type="term" value="P:cell morphogenesis"/>
    <property type="evidence" value="ECO:0007669"/>
    <property type="project" value="UniProtKB-UniRule"/>
</dbReference>
<dbReference type="GO" id="GO:0071555">
    <property type="term" value="P:cell wall organization"/>
    <property type="evidence" value="ECO:0007669"/>
    <property type="project" value="UniProtKB-KW"/>
</dbReference>
<dbReference type="GO" id="GO:0009245">
    <property type="term" value="P:lipid A biosynthetic process"/>
    <property type="evidence" value="ECO:0007669"/>
    <property type="project" value="UniProtKB-UniRule"/>
</dbReference>
<dbReference type="GO" id="GO:0009252">
    <property type="term" value="P:peptidoglycan biosynthetic process"/>
    <property type="evidence" value="ECO:0007669"/>
    <property type="project" value="UniProtKB-UniRule"/>
</dbReference>
<dbReference type="GO" id="GO:0008360">
    <property type="term" value="P:regulation of cell shape"/>
    <property type="evidence" value="ECO:0007669"/>
    <property type="project" value="UniProtKB-KW"/>
</dbReference>
<dbReference type="GO" id="GO:0006048">
    <property type="term" value="P:UDP-N-acetylglucosamine biosynthetic process"/>
    <property type="evidence" value="ECO:0007669"/>
    <property type="project" value="UniProtKB-UniPathway"/>
</dbReference>
<dbReference type="CDD" id="cd02540">
    <property type="entry name" value="GT2_GlmU_N_bac"/>
    <property type="match status" value="1"/>
</dbReference>
<dbReference type="CDD" id="cd03353">
    <property type="entry name" value="LbH_GlmU_C"/>
    <property type="match status" value="1"/>
</dbReference>
<dbReference type="FunFam" id="2.160.10.10:FF:000011">
    <property type="entry name" value="Bifunctional protein GlmU"/>
    <property type="match status" value="1"/>
</dbReference>
<dbReference type="FunFam" id="3.90.550.10:FF:000006">
    <property type="entry name" value="Bifunctional protein GlmU"/>
    <property type="match status" value="1"/>
</dbReference>
<dbReference type="Gene3D" id="2.160.10.10">
    <property type="entry name" value="Hexapeptide repeat proteins"/>
    <property type="match status" value="1"/>
</dbReference>
<dbReference type="Gene3D" id="3.90.550.10">
    <property type="entry name" value="Spore Coat Polysaccharide Biosynthesis Protein SpsA, Chain A"/>
    <property type="match status" value="1"/>
</dbReference>
<dbReference type="HAMAP" id="MF_01631">
    <property type="entry name" value="GlmU"/>
    <property type="match status" value="1"/>
</dbReference>
<dbReference type="InterPro" id="IPR005882">
    <property type="entry name" value="Bifunctional_GlmU"/>
</dbReference>
<dbReference type="InterPro" id="IPR050065">
    <property type="entry name" value="GlmU-like"/>
</dbReference>
<dbReference type="InterPro" id="IPR038009">
    <property type="entry name" value="GlmU_C_LbH"/>
</dbReference>
<dbReference type="InterPro" id="IPR001451">
    <property type="entry name" value="Hexapep"/>
</dbReference>
<dbReference type="InterPro" id="IPR018357">
    <property type="entry name" value="Hexapep_transf_CS"/>
</dbReference>
<dbReference type="InterPro" id="IPR025877">
    <property type="entry name" value="MobA-like_NTP_Trfase"/>
</dbReference>
<dbReference type="InterPro" id="IPR029044">
    <property type="entry name" value="Nucleotide-diphossugar_trans"/>
</dbReference>
<dbReference type="InterPro" id="IPR011004">
    <property type="entry name" value="Trimer_LpxA-like_sf"/>
</dbReference>
<dbReference type="NCBIfam" id="TIGR01173">
    <property type="entry name" value="glmU"/>
    <property type="match status" value="1"/>
</dbReference>
<dbReference type="NCBIfam" id="NF006986">
    <property type="entry name" value="PRK09451.1"/>
    <property type="match status" value="1"/>
</dbReference>
<dbReference type="PANTHER" id="PTHR43584:SF3">
    <property type="entry name" value="BIFUNCTIONAL PROTEIN GLMU"/>
    <property type="match status" value="1"/>
</dbReference>
<dbReference type="PANTHER" id="PTHR43584">
    <property type="entry name" value="NUCLEOTIDYL TRANSFERASE"/>
    <property type="match status" value="1"/>
</dbReference>
<dbReference type="Pfam" id="PF00132">
    <property type="entry name" value="Hexapep"/>
    <property type="match status" value="1"/>
</dbReference>
<dbReference type="Pfam" id="PF12804">
    <property type="entry name" value="NTP_transf_3"/>
    <property type="match status" value="1"/>
</dbReference>
<dbReference type="SUPFAM" id="SSF53448">
    <property type="entry name" value="Nucleotide-diphospho-sugar transferases"/>
    <property type="match status" value="1"/>
</dbReference>
<dbReference type="SUPFAM" id="SSF51161">
    <property type="entry name" value="Trimeric LpxA-like enzymes"/>
    <property type="match status" value="1"/>
</dbReference>
<dbReference type="PROSITE" id="PS00101">
    <property type="entry name" value="HEXAPEP_TRANSFERASES"/>
    <property type="match status" value="1"/>
</dbReference>
<organism>
    <name type="scientific">Salmonella dublin (strain CT_02021853)</name>
    <dbReference type="NCBI Taxonomy" id="439851"/>
    <lineage>
        <taxon>Bacteria</taxon>
        <taxon>Pseudomonadati</taxon>
        <taxon>Pseudomonadota</taxon>
        <taxon>Gammaproteobacteria</taxon>
        <taxon>Enterobacterales</taxon>
        <taxon>Enterobacteriaceae</taxon>
        <taxon>Salmonella</taxon>
    </lineage>
</organism>
<proteinExistence type="inferred from homology"/>
<name>GLMU_SALDC</name>
<protein>
    <recommendedName>
        <fullName evidence="1">Bifunctional protein GlmU</fullName>
    </recommendedName>
    <domain>
        <recommendedName>
            <fullName evidence="1">UDP-N-acetylglucosamine pyrophosphorylase</fullName>
            <ecNumber evidence="1">2.7.7.23</ecNumber>
        </recommendedName>
        <alternativeName>
            <fullName evidence="1">N-acetylglucosamine-1-phosphate uridyltransferase</fullName>
        </alternativeName>
    </domain>
    <domain>
        <recommendedName>
            <fullName evidence="1">Glucosamine-1-phosphate N-acetyltransferase</fullName>
            <ecNumber evidence="1">2.3.1.157</ecNumber>
        </recommendedName>
    </domain>
</protein>
<evidence type="ECO:0000255" key="1">
    <source>
        <dbReference type="HAMAP-Rule" id="MF_01631"/>
    </source>
</evidence>
<feature type="chain" id="PRO_1000186481" description="Bifunctional protein GlmU">
    <location>
        <begin position="1"/>
        <end position="456"/>
    </location>
</feature>
<feature type="region of interest" description="Pyrophosphorylase" evidence="1">
    <location>
        <begin position="1"/>
        <end position="229"/>
    </location>
</feature>
<feature type="region of interest" description="Linker" evidence="1">
    <location>
        <begin position="230"/>
        <end position="250"/>
    </location>
</feature>
<feature type="region of interest" description="N-acetyltransferase" evidence="1">
    <location>
        <begin position="251"/>
        <end position="456"/>
    </location>
</feature>
<feature type="active site" description="Proton acceptor" evidence="1">
    <location>
        <position position="363"/>
    </location>
</feature>
<feature type="binding site" evidence="1">
    <location>
        <begin position="11"/>
        <end position="14"/>
    </location>
    <ligand>
        <name>UDP-N-acetyl-alpha-D-glucosamine</name>
        <dbReference type="ChEBI" id="CHEBI:57705"/>
    </ligand>
</feature>
<feature type="binding site" evidence="1">
    <location>
        <position position="25"/>
    </location>
    <ligand>
        <name>UDP-N-acetyl-alpha-D-glucosamine</name>
        <dbReference type="ChEBI" id="CHEBI:57705"/>
    </ligand>
</feature>
<feature type="binding site" evidence="1">
    <location>
        <position position="76"/>
    </location>
    <ligand>
        <name>UDP-N-acetyl-alpha-D-glucosamine</name>
        <dbReference type="ChEBI" id="CHEBI:57705"/>
    </ligand>
</feature>
<feature type="binding site" evidence="1">
    <location>
        <begin position="81"/>
        <end position="82"/>
    </location>
    <ligand>
        <name>UDP-N-acetyl-alpha-D-glucosamine</name>
        <dbReference type="ChEBI" id="CHEBI:57705"/>
    </ligand>
</feature>
<feature type="binding site" evidence="1">
    <location>
        <begin position="103"/>
        <end position="105"/>
    </location>
    <ligand>
        <name>UDP-N-acetyl-alpha-D-glucosamine</name>
        <dbReference type="ChEBI" id="CHEBI:57705"/>
    </ligand>
</feature>
<feature type="binding site" evidence="1">
    <location>
        <position position="105"/>
    </location>
    <ligand>
        <name>Mg(2+)</name>
        <dbReference type="ChEBI" id="CHEBI:18420"/>
    </ligand>
</feature>
<feature type="binding site" evidence="1">
    <location>
        <position position="140"/>
    </location>
    <ligand>
        <name>UDP-N-acetyl-alpha-D-glucosamine</name>
        <dbReference type="ChEBI" id="CHEBI:57705"/>
    </ligand>
</feature>
<feature type="binding site" evidence="1">
    <location>
        <position position="154"/>
    </location>
    <ligand>
        <name>UDP-N-acetyl-alpha-D-glucosamine</name>
        <dbReference type="ChEBI" id="CHEBI:57705"/>
    </ligand>
</feature>
<feature type="binding site" evidence="1">
    <location>
        <position position="169"/>
    </location>
    <ligand>
        <name>UDP-N-acetyl-alpha-D-glucosamine</name>
        <dbReference type="ChEBI" id="CHEBI:57705"/>
    </ligand>
</feature>
<feature type="binding site" evidence="1">
    <location>
        <position position="227"/>
    </location>
    <ligand>
        <name>Mg(2+)</name>
        <dbReference type="ChEBI" id="CHEBI:18420"/>
    </ligand>
</feature>
<feature type="binding site" evidence="1">
    <location>
        <position position="227"/>
    </location>
    <ligand>
        <name>UDP-N-acetyl-alpha-D-glucosamine</name>
        <dbReference type="ChEBI" id="CHEBI:57705"/>
    </ligand>
</feature>
<feature type="binding site" evidence="1">
    <location>
        <position position="333"/>
    </location>
    <ligand>
        <name>UDP-N-acetyl-alpha-D-glucosamine</name>
        <dbReference type="ChEBI" id="CHEBI:57705"/>
    </ligand>
</feature>
<feature type="binding site" evidence="1">
    <location>
        <position position="351"/>
    </location>
    <ligand>
        <name>UDP-N-acetyl-alpha-D-glucosamine</name>
        <dbReference type="ChEBI" id="CHEBI:57705"/>
    </ligand>
</feature>
<feature type="binding site" evidence="1">
    <location>
        <position position="366"/>
    </location>
    <ligand>
        <name>UDP-N-acetyl-alpha-D-glucosamine</name>
        <dbReference type="ChEBI" id="CHEBI:57705"/>
    </ligand>
</feature>
<feature type="binding site" evidence="1">
    <location>
        <position position="377"/>
    </location>
    <ligand>
        <name>UDP-N-acetyl-alpha-D-glucosamine</name>
        <dbReference type="ChEBI" id="CHEBI:57705"/>
    </ligand>
</feature>
<feature type="binding site" evidence="1">
    <location>
        <position position="380"/>
    </location>
    <ligand>
        <name>acetyl-CoA</name>
        <dbReference type="ChEBI" id="CHEBI:57288"/>
    </ligand>
</feature>
<feature type="binding site" evidence="1">
    <location>
        <begin position="386"/>
        <end position="387"/>
    </location>
    <ligand>
        <name>acetyl-CoA</name>
        <dbReference type="ChEBI" id="CHEBI:57288"/>
    </ligand>
</feature>
<feature type="binding site" evidence="1">
    <location>
        <position position="405"/>
    </location>
    <ligand>
        <name>acetyl-CoA</name>
        <dbReference type="ChEBI" id="CHEBI:57288"/>
    </ligand>
</feature>
<feature type="binding site" evidence="1">
    <location>
        <position position="423"/>
    </location>
    <ligand>
        <name>acetyl-CoA</name>
        <dbReference type="ChEBI" id="CHEBI:57288"/>
    </ligand>
</feature>
<feature type="binding site" evidence="1">
    <location>
        <position position="440"/>
    </location>
    <ligand>
        <name>acetyl-CoA</name>
        <dbReference type="ChEBI" id="CHEBI:57288"/>
    </ligand>
</feature>
<accession>B5FN29</accession>
<gene>
    <name evidence="1" type="primary">glmU</name>
    <name type="ordered locus">SeD_A4251</name>
</gene>
<comment type="function">
    <text evidence="1">Catalyzes the last two sequential reactions in the de novo biosynthetic pathway for UDP-N-acetylglucosamine (UDP-GlcNAc). The C-terminal domain catalyzes the transfer of acetyl group from acetyl coenzyme A to glucosamine-1-phosphate (GlcN-1-P) to produce N-acetylglucosamine-1-phosphate (GlcNAc-1-P), which is converted into UDP-GlcNAc by the transfer of uridine 5-monophosphate (from uridine 5-triphosphate), a reaction catalyzed by the N-terminal domain.</text>
</comment>
<comment type="catalytic activity">
    <reaction evidence="1">
        <text>alpha-D-glucosamine 1-phosphate + acetyl-CoA = N-acetyl-alpha-D-glucosamine 1-phosphate + CoA + H(+)</text>
        <dbReference type="Rhea" id="RHEA:13725"/>
        <dbReference type="ChEBI" id="CHEBI:15378"/>
        <dbReference type="ChEBI" id="CHEBI:57287"/>
        <dbReference type="ChEBI" id="CHEBI:57288"/>
        <dbReference type="ChEBI" id="CHEBI:57776"/>
        <dbReference type="ChEBI" id="CHEBI:58516"/>
        <dbReference type="EC" id="2.3.1.157"/>
    </reaction>
</comment>
<comment type="catalytic activity">
    <reaction evidence="1">
        <text>N-acetyl-alpha-D-glucosamine 1-phosphate + UTP + H(+) = UDP-N-acetyl-alpha-D-glucosamine + diphosphate</text>
        <dbReference type="Rhea" id="RHEA:13509"/>
        <dbReference type="ChEBI" id="CHEBI:15378"/>
        <dbReference type="ChEBI" id="CHEBI:33019"/>
        <dbReference type="ChEBI" id="CHEBI:46398"/>
        <dbReference type="ChEBI" id="CHEBI:57705"/>
        <dbReference type="ChEBI" id="CHEBI:57776"/>
        <dbReference type="EC" id="2.7.7.23"/>
    </reaction>
</comment>
<comment type="cofactor">
    <cofactor evidence="1">
        <name>Mg(2+)</name>
        <dbReference type="ChEBI" id="CHEBI:18420"/>
    </cofactor>
    <text evidence="1">Binds 1 Mg(2+) ion per subunit.</text>
</comment>
<comment type="pathway">
    <text evidence="1">Nucleotide-sugar biosynthesis; UDP-N-acetyl-alpha-D-glucosamine biosynthesis; N-acetyl-alpha-D-glucosamine 1-phosphate from alpha-D-glucosamine 6-phosphate (route II): step 2/2.</text>
</comment>
<comment type="pathway">
    <text evidence="1">Nucleotide-sugar biosynthesis; UDP-N-acetyl-alpha-D-glucosamine biosynthesis; UDP-N-acetyl-alpha-D-glucosamine from N-acetyl-alpha-D-glucosamine 1-phosphate: step 1/1.</text>
</comment>
<comment type="pathway">
    <text evidence="1">Bacterial outer membrane biogenesis; LPS lipid A biosynthesis.</text>
</comment>
<comment type="subunit">
    <text evidence="1">Homotrimer.</text>
</comment>
<comment type="subcellular location">
    <subcellularLocation>
        <location evidence="1">Cytoplasm</location>
    </subcellularLocation>
</comment>
<comment type="similarity">
    <text evidence="1">In the N-terminal section; belongs to the N-acetylglucosamine-1-phosphate uridyltransferase family.</text>
</comment>
<comment type="similarity">
    <text evidence="1">In the C-terminal section; belongs to the transferase hexapeptide repeat family.</text>
</comment>
<sequence length="456" mass="49180">MLNSAMSVVILAAGKGTRMYSDIPKVLHTLAGKPMVQHVIDAATKLGAAQVHLVYGHGGELLKQTLKDDKLNWVLQAEQLGTGHAMQQAAPFFSDDEDILMLYGDVPLISVETLQRLRDAKPQGGIGLLTVKLDDPSGYGRITRENGKVTGIVEHKDATDEQRQIQEINTGILIANGADLKRWLSKLTNNNAQGEYYITDIIALAYQEGREIAAVHPARISETDGVNNRLQLSRLERIYQAEQAEKLLLSGVMLRDPARFDLRGTLHCGMDVEIDANVIIEGYVTLGHRVKIGAGCIIKNSVIGDDCEISPYSVVEDAHLEAACTIGPFARLRPGAELLAGAHVGNFVEMKKARLGKGSKAGHLTYLGDAEIGDNVNIGAGTITCNYDGANKFKTVIGDDVFVGSDTQLVAPVTVGKGATIAAGTTVTRNVADNELVLSRVPQVHKQGWQRPVKKK</sequence>
<reference key="1">
    <citation type="journal article" date="2011" name="J. Bacteriol.">
        <title>Comparative genomics of 28 Salmonella enterica isolates: evidence for CRISPR-mediated adaptive sublineage evolution.</title>
        <authorList>
            <person name="Fricke W.F."/>
            <person name="Mammel M.K."/>
            <person name="McDermott P.F."/>
            <person name="Tartera C."/>
            <person name="White D.G."/>
            <person name="Leclerc J.E."/>
            <person name="Ravel J."/>
            <person name="Cebula T.A."/>
        </authorList>
    </citation>
    <scope>NUCLEOTIDE SEQUENCE [LARGE SCALE GENOMIC DNA]</scope>
    <source>
        <strain>CT_02021853</strain>
    </source>
</reference>